<organism>
    <name type="scientific">Caenorhabditis elegans</name>
    <dbReference type="NCBI Taxonomy" id="6239"/>
    <lineage>
        <taxon>Eukaryota</taxon>
        <taxon>Metazoa</taxon>
        <taxon>Ecdysozoa</taxon>
        <taxon>Nematoda</taxon>
        <taxon>Chromadorea</taxon>
        <taxon>Rhabditida</taxon>
        <taxon>Rhabditina</taxon>
        <taxon>Rhabditomorpha</taxon>
        <taxon>Rhabditoidea</taxon>
        <taxon>Rhabditidae</taxon>
        <taxon>Peloderinae</taxon>
        <taxon>Caenorhabditis</taxon>
    </lineage>
</organism>
<reference evidence="31 32" key="1">
    <citation type="journal article" date="1999" name="Nature">
        <title>Diverse behavioural defects caused by mutations in Caenorhabditis elegans unc-43 CaM kinase II.</title>
        <authorList>
            <person name="Reiner D.J."/>
            <person name="Newton E.M."/>
            <person name="Tian H."/>
            <person name="Thomas J.H."/>
        </authorList>
    </citation>
    <scope>NUCLEOTIDE SEQUENCE [MRNA] (ISOFORM D)</scope>
    <scope>TISSUE SPECIFICITY</scope>
    <scope>DISRUPTION PHENOTYPE</scope>
    <scope>MUTAGENESIS OF GLU-108</scope>
</reference>
<reference evidence="31 33" key="2">
    <citation type="submission" date="2000-02" db="EMBL/GenBank/DDBJ databases">
        <title>Biochemical properties of calcium/calmodulin-pependent protein kinase II (UNC-43) Isoforms in Caernohabditis elegans.</title>
        <authorList>
            <person name="Guarin E."/>
            <person name="Hernandez M.C."/>
            <person name="Gomez M."/>
            <person name="Schulman H."/>
            <person name="Nef P."/>
        </authorList>
    </citation>
    <scope>NUCLEOTIDE SEQUENCE [MRNA] (ISOFORMS E; F; G; H; I; K AND L)</scope>
</reference>
<reference evidence="31 34" key="3">
    <citation type="journal article" date="1998" name="Science">
        <title>Genome sequence of the nematode C. elegans: a platform for investigating biology.</title>
        <authorList>
            <consortium name="The C. elegans sequencing consortium"/>
        </authorList>
    </citation>
    <scope>NUCLEOTIDE SEQUENCE [LARGE SCALE GENOMIC DNA]</scope>
    <scope>ALTERNATIVE SPLICING</scope>
    <source>
        <strain evidence="34">Bristol N2</strain>
    </source>
</reference>
<reference key="4">
    <citation type="journal article" date="1999" name="Cell">
        <title>Lateral signaling mediated by axon contact and calcium entry regulates asymmetric odorant receptor expression in C. elegans.</title>
        <authorList>
            <person name="Troemel E.R."/>
            <person name="Sagasti A."/>
            <person name="Bargmann C.I."/>
        </authorList>
    </citation>
    <scope>FUNCTION</scope>
</reference>
<reference key="5">
    <citation type="journal article" date="2001" name="Cell">
        <title>The CaMKII UNC-43 activates the MAPKKK NSY-1 to execute a lateral signaling decision required for asymmetric olfactory neuron fates.</title>
        <authorList>
            <person name="Sagasti A."/>
            <person name="Hisamoto N."/>
            <person name="Hyodo J."/>
            <person name="Tanaka-Hino M."/>
            <person name="Matsumoto K."/>
            <person name="Bargmann C.I."/>
        </authorList>
    </citation>
    <scope>INTERACTION WITH NSY-1</scope>
</reference>
<reference key="6">
    <citation type="journal article" date="2002" name="Mol. Biol. Cell">
        <title>Calcineurin, a calcium/calmodulin-dependent protein phosphatase, is involved in movement, fertility, egg laying, and growth in Caenorhabditis elegans.</title>
        <authorList>
            <person name="Bandyopadhyay J."/>
            <person name="Lee J."/>
            <person name="Lee J."/>
            <person name="Lee J.I."/>
            <person name="Yu J.-R."/>
            <person name="Jee C."/>
            <person name="Cho J.-H."/>
            <person name="Jung S."/>
            <person name="Lee M.H."/>
            <person name="Zannoni S."/>
            <person name="Singson A."/>
            <person name="Kim D."/>
            <person name="Koo H.-S."/>
            <person name="Ahnn J."/>
        </authorList>
    </citation>
    <scope>FUNCTION</scope>
    <scope>DISRUPTION PHENOTYPE</scope>
</reference>
<reference key="7">
    <citation type="journal article" date="2004" name="Genetics">
        <title>Caenorhabditis elegans OSR-1 regulates behavioral and physiological responses to hyperosmotic environments.</title>
        <authorList>
            <person name="Solomon A."/>
            <person name="Bandhakavi S."/>
            <person name="Jabbar S."/>
            <person name="Shah R."/>
            <person name="Beitel G.J."/>
            <person name="Morimoto R.I."/>
        </authorList>
    </citation>
    <scope>FUNCTION</scope>
</reference>
<reference key="8">
    <citation type="journal article" date="2005" name="Development">
        <title>Eph and NMDA receptors control Ca2+/calmodulin-dependent protein kinase II activation during C. elegans oocyte meiotic maturation.</title>
        <authorList>
            <person name="Corrigan C."/>
            <person name="Subramanian R."/>
            <person name="Miller M.A."/>
        </authorList>
    </citation>
    <scope>FUNCTION</scope>
    <scope>TISSUE SPECIFICITY</scope>
</reference>
<reference key="9">
    <citation type="journal article" date="2005" name="Genes Dev.">
        <title>A Toll-interleukin 1 repeat protein at the synapse specifies asymmetric odorant receptor expression via ASK1 MAPKKK signaling.</title>
        <authorList>
            <person name="Chuang C.-F."/>
            <person name="Bargmann C.I."/>
        </authorList>
    </citation>
    <scope>INTERACTION WITH TIR-1</scope>
    <scope>SUBCELLULAR LOCATION</scope>
</reference>
<reference key="10">
    <citation type="journal article" date="2005" name="J. Cell Sci.">
        <title>The role of regulatory domain interactions in UNC-43 CaMKII localization and trafficking.</title>
        <authorList>
            <person name="Umemura T."/>
            <person name="Rapp P."/>
            <person name="Rongo C."/>
        </authorList>
    </citation>
    <scope>FUNCTION</scope>
    <scope>SUBCELLULAR LOCATION</scope>
    <scope>TISSUE SPECIFICITY</scope>
    <scope>MUTAGENESIS OF PHE-97; GLU-108; LYS-147; ASP-236; HIS-280; ARG-281 AND THR-284</scope>
</reference>
<reference key="11">
    <citation type="journal article" date="2007" name="J. Neurosci.">
        <title>Presynaptic Ca2+/calmodulin-dependent protein kinase II modulates neurotransmitter release by activating BK channels at Caenorhabditis elegans neuromuscular junction.</title>
        <authorList>
            <person name="Liu Q."/>
            <person name="Chen B."/>
            <person name="Ge Q."/>
            <person name="Wang Z.W."/>
        </authorList>
    </citation>
    <scope>FUNCTION</scope>
    <scope>DISRUPTION PHENOTYPE</scope>
</reference>
<reference key="12">
    <citation type="journal article" date="2007" name="PLoS Genet.">
        <title>Food deprivation attenuates seizures through CaMKII and EAG K+ channels.</title>
        <authorList>
            <person name="LeBoeuf B."/>
            <person name="Gruninger T.R."/>
            <person name="Garcia L.R."/>
        </authorList>
    </citation>
    <scope>FUNCTION</scope>
    <scope>DISRUPTION PHENOTYPE</scope>
    <scope>MUTAGENESIS OF GLY-170; SER-179 AND ALA-665</scope>
</reference>
<reference key="13">
    <citation type="journal article" date="2008" name="Am. J. Physiol.">
        <title>Intestinal Ca2+ wave dynamics in freely moving C. elegans coordinate execution of a rhythmic motor program.</title>
        <authorList>
            <person name="Nehrke K."/>
            <person name="Denton J."/>
            <person name="Mowrey W."/>
        </authorList>
    </citation>
    <scope>FUNCTION</scope>
    <scope>DISRUPTION PHENOTYPE</scope>
</reference>
<reference key="14">
    <citation type="journal article" date="2011" name="Development">
        <title>Microtubule-based localization of a synaptic calcium-signaling complex is required for left-right neuronal asymmetry in C. elegans.</title>
        <authorList>
            <person name="Chang C."/>
            <person name="Hsieh Y.W."/>
            <person name="Lesch B.J."/>
            <person name="Bargmann C.I."/>
            <person name="Chuang C.F."/>
        </authorList>
    </citation>
    <scope>FUNCTION</scope>
    <scope>SUBCELLULAR LOCATION</scope>
</reference>
<reference key="15">
    <citation type="journal article" date="2011" name="Neuroscience">
        <title>The effects of transient starvation persist through direct interactions between CaMKII and ether-a-go-go K+ channels in C. elegans males.</title>
        <authorList>
            <person name="LeBoeuf B."/>
            <person name="Guo X."/>
            <person name="Garcia L.R."/>
        </authorList>
    </citation>
    <scope>FUNCTION</scope>
    <scope>INTERACTION WITH EGL-2</scope>
</reference>
<reference key="16">
    <citation type="journal article" date="2012" name="PLoS ONE">
        <title>D1 dopamine receptor signaling is modulated by the R7 RGS protein EAT-16 and the R7 binding protein RSBP-1 in Caenoerhabditis elegans motor neurons.</title>
        <authorList>
            <person name="Wani K.A."/>
            <person name="Catanese M."/>
            <person name="Normantowicz R."/>
            <person name="Herd M."/>
            <person name="Maher K.N."/>
            <person name="Chase D.L."/>
        </authorList>
    </citation>
    <scope>FUNCTION</scope>
</reference>
<reference key="17">
    <citation type="journal article" date="2013" name="Elife">
        <title>CAMKII and Calcineurin regulate the lifespan of Caenorhabditis elegans through the FOXO transcription factor DAF-16.</title>
        <authorList>
            <person name="Tao L."/>
            <person name="Xie Q."/>
            <person name="Ding Y.H."/>
            <person name="Li S.T."/>
            <person name="Peng S."/>
            <person name="Zhang Y.P."/>
            <person name="Tan D."/>
            <person name="Yuan Z."/>
            <person name="Dong M.Q."/>
        </authorList>
    </citation>
    <scope>FUNCTION</scope>
    <scope>MUTAGENESIS OF GLU-108</scope>
</reference>
<reference key="18">
    <citation type="journal article" date="2013" name="J. Neurosci.">
        <title>A neuronal signaling pathway of CaMKII and Gqalpha regulates experience-dependent transcription of tph-1.</title>
        <authorList>
            <person name="Qin Y."/>
            <person name="Zhang X."/>
            <person name="Zhang Y."/>
        </authorList>
    </citation>
    <scope>FUNCTION</scope>
    <scope>TISSUE SPECIFICITY</scope>
    <scope>DISRUPTION PHENOTYPE</scope>
</reference>
<reference key="19">
    <citation type="journal article" date="2013" name="Neural Dev.">
        <title>The Caenorhabditis elegans voltage-gated calcium channel subunits UNC-2 and UNC-36 and the calcium-dependent kinase UNC-43/CaMKII regulate neuromuscular junction morphology.</title>
        <authorList>
            <person name="Caylor R.C."/>
            <person name="Jin Y."/>
            <person name="Ackley B.D."/>
        </authorList>
    </citation>
    <scope>FUNCTION</scope>
</reference>
<reference key="20">
    <citation type="journal article" date="2013" name="PLoS Genet.">
        <title>RFX transcription factor DAF-19 regulates 5-HT and innate immune responses to pathogenic bacteria in Caenorhabditis elegans.</title>
        <authorList>
            <person name="Xie Y."/>
            <person name="Moussaif M."/>
            <person name="Choi S."/>
            <person name="Xu L."/>
            <person name="Sze J.Y."/>
        </authorList>
    </citation>
    <scope>FUNCTION</scope>
</reference>
<reference key="21">
    <citation type="journal article" date="2005" name="Cell">
        <title>Structure of the autoinhibited kinase domain of CaMKII and SAXS analysis of the holoenzyme.</title>
        <authorList>
            <person name="Rosenberg O.S."/>
            <person name="Deindl S."/>
            <person name="Sung R.J."/>
            <person name="Nairn A.C."/>
            <person name="Kuriyan J."/>
        </authorList>
    </citation>
    <scope>X-RAY CRYSTALLOGRAPHY (1.8 ANGSTROMS) OF 1-343 OF ISOFORM I</scope>
    <scope>ACTIVITY REGULATION</scope>
    <scope>PHOSPHORYLATION AT THR-284</scope>
    <scope>MUTAGENESIS OF ASP-134</scope>
</reference>
<reference key="22">
    <citation type="journal article" date="2006" name="FEBS J.">
        <title>Oligomerization states of the association domain and the holoenzyme of Ca2+/CaM kinase II.</title>
        <authorList>
            <person name="Rosenberg O.S."/>
            <person name="Deindl S."/>
            <person name="Comolli L.R."/>
            <person name="Hoelz A."/>
            <person name="Downing K.H."/>
            <person name="Nairn A.C."/>
            <person name="Kuriyan J."/>
        </authorList>
    </citation>
    <scope>X-RAY CRYSTALLOGRAPHY (2.6 ANGSTROMS) OF 340-482 OF ISOFORM D</scope>
    <scope>SUBUNIT</scope>
</reference>
<reference key="23">
    <citation type="journal article" date="2010" name="Nat. Struct. Mol. Biol.">
        <title>Intersubunit capture of regulatory segments is a component of cooperative CaMKII activation.</title>
        <authorList>
            <person name="Chao L.H."/>
            <person name="Pellicena P."/>
            <person name="Deindl S."/>
            <person name="Barclay L.A."/>
            <person name="Schulman H."/>
            <person name="Kuriyan J."/>
        </authorList>
    </citation>
    <scope>X-RAY CRYSTALLOGRAPHY (1.7 ANGSTROMS) OF 5-288 OF ISOFORM E</scope>
    <scope>INTERACTION WITH CALMODULIN</scope>
    <scope>ACTIVITY REGULATION</scope>
    <scope>SUBUNIT</scope>
    <scope>MUTAGENESIS OF LYS-41; PHE-97; ILE-100; ASP-134; ILE-200 AND 278-ALA-ILE-279</scope>
</reference>
<gene>
    <name type="primary">unc-43</name>
    <name type="ORF">K11E8.1</name>
</gene>
<accession>O62305</accession>
<accession>A5JYT0</accession>
<accession>A7LPH2</accession>
<accession>B3GWC8</accession>
<accession>O62304</accession>
<accession>Q21431</accession>
<accession>Q7JLT8</accession>
<accession>Q9NG91</accession>
<accession>Q9NH55</accession>
<accession>Q9NH56</accession>
<accession>Q9NH57</accession>
<accession>Q9NH58</accession>
<accession>Q9NH59</accession>
<accession>Q9NH60</accession>
<accession>Q9U6Q0</accession>
<protein>
    <recommendedName>
        <fullName evidence="28">Calcium/calmodulin-dependent protein kinase type II</fullName>
        <shortName evidence="28">CaM kinase II</shortName>
        <ecNumber>2.7.11.17</ecNumber>
    </recommendedName>
    <alternativeName>
        <fullName>Uncoordinated protein 43</fullName>
    </alternativeName>
</protein>
<name>KCC2D_CAEEL</name>
<keyword id="KW-0002">3D-structure</keyword>
<keyword id="KW-0025">Alternative splicing</keyword>
<keyword id="KW-0067">ATP-binding</keyword>
<keyword id="KW-0112">Calmodulin-binding</keyword>
<keyword id="KW-0966">Cell projection</keyword>
<keyword id="KW-0963">Cytoplasm</keyword>
<keyword id="KW-0418">Kinase</keyword>
<keyword id="KW-0460">Magnesium</keyword>
<keyword id="KW-0479">Metal-binding</keyword>
<keyword id="KW-0547">Nucleotide-binding</keyword>
<keyword id="KW-0597">Phosphoprotein</keyword>
<keyword id="KW-1185">Reference proteome</keyword>
<keyword id="KW-0723">Serine/threonine-protein kinase</keyword>
<keyword id="KW-0346">Stress response</keyword>
<keyword id="KW-0808">Transferase</keyword>
<feature type="chain" id="PRO_0000396645" description="Calcium/calmodulin-dependent protein kinase type II">
    <location>
        <begin position="1"/>
        <end position="720"/>
    </location>
</feature>
<feature type="domain" description="Protein kinase" evidence="3">
    <location>
        <begin position="12"/>
        <end position="269"/>
    </location>
</feature>
<feature type="region of interest" description="Disordered" evidence="4">
    <location>
        <begin position="317"/>
        <end position="345"/>
    </location>
</feature>
<feature type="region of interest" description="Disordered" evidence="4">
    <location>
        <begin position="504"/>
        <end position="586"/>
    </location>
</feature>
<feature type="compositionally biased region" description="Polar residues" evidence="4">
    <location>
        <begin position="504"/>
        <end position="514"/>
    </location>
</feature>
<feature type="compositionally biased region" description="Polar residues" evidence="4">
    <location>
        <begin position="526"/>
        <end position="540"/>
    </location>
</feature>
<feature type="compositionally biased region" description="Low complexity" evidence="4">
    <location>
        <begin position="569"/>
        <end position="586"/>
    </location>
</feature>
<feature type="active site" description="Proton acceptor" evidence="31">
    <location>
        <position position="134"/>
    </location>
</feature>
<feature type="binding site" evidence="1 3">
    <location>
        <begin position="18"/>
        <end position="26"/>
    </location>
    <ligand>
        <name>ATP</name>
        <dbReference type="ChEBI" id="CHEBI:30616"/>
    </ligand>
</feature>
<feature type="binding site" evidence="3 18">
    <location>
        <position position="41"/>
    </location>
    <ligand>
        <name>ATP</name>
        <dbReference type="ChEBI" id="CHEBI:30616"/>
    </ligand>
</feature>
<feature type="modified residue" description="Phosphothreonine; by autocatalysis" evidence="13">
    <location>
        <position position="284"/>
    </location>
</feature>
<feature type="splice variant" id="VSP_039590" description="In isoform n." evidence="29">
    <location>
        <begin position="1"/>
        <end position="505"/>
    </location>
</feature>
<feature type="splice variant" id="VSP_039591" description="In isoform p." evidence="29">
    <location>
        <begin position="1"/>
        <end position="504"/>
    </location>
</feature>
<feature type="splice variant" id="VSP_039592" description="In isoform a." evidence="29">
    <location>
        <begin position="1"/>
        <end position="490"/>
    </location>
</feature>
<feature type="splice variant" id="VSP_039593" description="In isoform o." evidence="29">
    <location>
        <begin position="1"/>
        <end position="416"/>
    </location>
</feature>
<feature type="splice variant" id="VSP_039594" description="In isoform m." evidence="29">
    <location>
        <begin position="1"/>
        <end position="414"/>
    </location>
</feature>
<feature type="splice variant" id="VSP_039595" description="In isoform b." evidence="29">
    <original>HCIQQILESIAYCHSNGIVHRDLKPE</original>
    <variation>CCIMQILDGVNYCHQRGIVHRDMKV</variation>
    <location>
        <begin position="113"/>
        <end position="138"/>
    </location>
</feature>
<feature type="splice variant" id="VSP_039596" description="In isoform b." evidence="29">
    <location>
        <begin position="139"/>
        <end position="720"/>
    </location>
</feature>
<feature type="splice variant" id="VSP_039597" description="In isoform d, isoform g and isoform i." evidence="28 29 30">
    <original>AAISAVKMVTRMSGVL</original>
    <variation>GAILTTMIATRNLSNL</variation>
    <location>
        <begin position="299"/>
        <end position="314"/>
    </location>
</feature>
<feature type="splice variant" id="VSP_039598" description="In isoform f." evidence="29 30">
    <original>AAISAVKMVTRMSGV</original>
    <variation>GAILTTMIATRNLSS</variation>
    <location>
        <begin position="299"/>
        <end position="313"/>
    </location>
</feature>
<feature type="splice variant" id="VSP_039599" description="In isoform k." evidence="29 30">
    <original>AAIS</original>
    <variation>VVDS</variation>
    <location>
        <begin position="299"/>
        <end position="302"/>
    </location>
</feature>
<feature type="splice variant" id="VSP_039600" description="In isoform l." evidence="29 30">
    <original>AAIS</original>
    <variation>VAIC</variation>
    <location>
        <begin position="299"/>
        <end position="302"/>
    </location>
</feature>
<feature type="splice variant" id="VSP_039601" description="In isoform k and isoform l." evidence="29 30">
    <location>
        <begin position="303"/>
        <end position="720"/>
    </location>
</feature>
<feature type="splice variant" id="VSP_039602" description="In isoform f." evidence="29 30">
    <location>
        <begin position="314"/>
        <end position="515"/>
    </location>
</feature>
<feature type="splice variant" id="VSP_039603" description="In isoform d, isoform g and isoform i." evidence="28 29 30">
    <location>
        <begin position="315"/>
        <end position="514"/>
    </location>
</feature>
<feature type="splice variant" id="VSP_039604" description="In isoform e and isoform h." evidence="28 29 30">
    <original>VYPNVLLFNPQKFPR</original>
    <variation>GAILTTMIATRNLSN</variation>
    <location>
        <begin position="350"/>
        <end position="364"/>
    </location>
</feature>
<feature type="splice variant" id="VSP_039605" description="In isoform e and isoform h." evidence="28 29 30">
    <location>
        <begin position="365"/>
        <end position="513"/>
    </location>
</feature>
<feature type="splice variant" id="VSP_039606" description="In isoform m." evidence="29">
    <original>PYHCFTNKMSNYERAAPSSHGSSTTKKIANAIADLVIRRSSPSIRRKTEADVHNSNRNRKVSAPANLQHALVPVIDVVVATGALASSSVDNLSASTSS</original>
    <variation>MDGLLARLKLGSKRKKKTSSSVKRSSRPESARQAPRDTTGSLYSNLTASSSTVSACSAPEIVVLKKEQVVLAVDHKDQVDEQKKKNEQVVKKPEKLEVEAD</variation>
    <location>
        <begin position="415"/>
        <end position="512"/>
    </location>
</feature>
<feature type="splice variant" id="VSP_039607" description="In isoform o." evidence="29">
    <original>HCFTNKMSNYERAAPSSHGSSTTKKIANAIADLVIRRSSPSIRRKTEADVHNSNRNRKVSAPANLQHALVPVIDVVVATGALASSSVDNLSASTSSDL</original>
    <variation>MDGLLARLKLGSKRKKKTSSSVKRSSRPESARQAPRDTTGSLYSNLTASSSTVSACSAPEIVVLKKEQVVLAVDHKDQVDEQKKKNEQVVKKPEKLEVEAD</variation>
    <location>
        <begin position="417"/>
        <end position="514"/>
    </location>
</feature>
<feature type="splice variant" id="VSP_039608" description="In isoform a." evidence="29">
    <original>VVVATGALASSSVDNLSASTSSDLG</original>
    <variation>MKNIEYWQVLLNKIFATYKIKMKQC</variation>
    <location>
        <begin position="491"/>
        <end position="515"/>
    </location>
</feature>
<feature type="splice variant" id="VSP_039609" description="In isoform p." evidence="29">
    <original>NLSASTSSD</original>
    <variation>MIATRNLSN</variation>
    <location>
        <begin position="505"/>
        <end position="513"/>
    </location>
</feature>
<feature type="splice variant" id="VSP_039610" description="In isoform n." evidence="29">
    <original>LSASTSSDLG</original>
    <variation>MNFLRFSGKC</variation>
    <location>
        <begin position="506"/>
        <end position="515"/>
    </location>
</feature>
<feature type="splice variant" id="VSP_039611" description="In isoform d, isoform e and isoform o." evidence="28 29 30">
    <location>
        <begin position="548"/>
        <end position="585"/>
    </location>
</feature>
<feature type="splice variant" id="VSP_039612" description="In isoform i." evidence="29 30">
    <original>GG</original>
    <variation>NE</variation>
    <location>
        <begin position="549"/>
        <end position="550"/>
    </location>
</feature>
<feature type="splice variant" id="VSP_039613" description="In isoform i." evidence="29 30">
    <location>
        <begin position="551"/>
        <end position="720"/>
    </location>
</feature>
<feature type="mutagenesis site" description="Loss of kinase activity." evidence="18">
    <original>K</original>
    <variation>M</variation>
    <location>
        <position position="41"/>
    </location>
</feature>
<feature type="mutagenesis site" description="Loss of cooperative activation of adjacent holoenzyme subunits." evidence="11 18">
    <original>F</original>
    <variation>E</variation>
    <location>
        <position position="97"/>
    </location>
</feature>
<feature type="mutagenesis site" description="Increase in calcium independent kinase activity, no effect on translocation to the neurite." evidence="11 18">
    <original>F</original>
    <variation>K</variation>
    <location>
        <position position="97"/>
    </location>
</feature>
<feature type="mutagenesis site" description="Loss of cooperative activation of adjacent holoenzyme subunits." evidence="18">
    <original>I</original>
    <variation>K</variation>
    <location>
        <position position="100"/>
    </location>
</feature>
<feature type="mutagenesis site" description="In n498gf; slight increase in calcium independent kinase activity, no effect on translocation to the neurite. Nuclear translocation of daf-16 resulting in lifespan extension." evidence="6 11 25">
    <original>E</original>
    <variation>K</variation>
    <location>
        <position position="108"/>
    </location>
</feature>
<feature type="mutagenesis site" description="Loss of autoinhibition and increase in binding of Ca2+/calmodulin." evidence="13 18">
    <original>D</original>
    <variation>N</variation>
    <location>
        <position position="134"/>
    </location>
</feature>
<feature type="mutagenesis site" description="Slight increase in calcium independent kinase activity, no effect on translocation to the neurite." evidence="11">
    <original>K</original>
    <variation>E</variation>
    <location>
        <position position="147"/>
    </location>
</feature>
<feature type="mutagenesis site" description="In sy574; abnormal spicule protraction; when associated with V-665." evidence="16">
    <original>G</original>
    <variation>E</variation>
    <location>
        <position position="170"/>
    </location>
</feature>
<feature type="mutagenesis site" description="In e408; males display locomotor and muscle seizure defects and egg laying defects." evidence="16">
    <original>S</original>
    <variation>L</variation>
    <location>
        <position position="179"/>
    </location>
</feature>
<feature type="mutagenesis site" description="Loss of cooperative activation of adjacent holoenzyme subunits." evidence="18">
    <original>I</original>
    <variation>K</variation>
    <location>
        <position position="200"/>
    </location>
</feature>
<feature type="mutagenesis site" description="Increase in calcium independent kinase activity, loss of translocation to neurites and glr-1 trafficking." evidence="11">
    <original>D</original>
    <variation>R</variation>
    <location>
        <position position="236"/>
    </location>
</feature>
<feature type="mutagenesis site" description="Decrease in binding of Ca2+/calmodulin." evidence="18">
    <original>AI</original>
    <variation>DD</variation>
    <location>
        <begin position="278"/>
        <end position="279"/>
    </location>
</feature>
<feature type="mutagenesis site" description="Increase in calcium independent kinase activity, no effect on translocation to the neurite." evidence="11">
    <original>H</original>
    <variation>K</variation>
    <location>
        <position position="280"/>
    </location>
</feature>
<feature type="mutagenesis site" description="Increase in calcium independent kinase activity and translocation to an unlocalized pool in the neurite. Small decrease in glr-1 trafficking." evidence="11">
    <original>R</original>
    <variation>E</variation>
    <location>
        <position position="281"/>
    </location>
</feature>
<feature type="mutagenesis site" description="Constitutively activate kinase activity, increase in translocation to the neurites." evidence="11">
    <original>T</original>
    <variation>D</variation>
    <location>
        <position position="284"/>
    </location>
</feature>
<feature type="mutagenesis site" description="In sy574; abnormal spicule protraction; when associated with E-170." evidence="16">
    <original>A</original>
    <variation>V</variation>
    <location>
        <position position="665"/>
    </location>
</feature>
<feature type="turn" evidence="37">
    <location>
        <begin position="7"/>
        <end position="11"/>
    </location>
</feature>
<feature type="strand" evidence="37">
    <location>
        <begin position="12"/>
        <end position="21"/>
    </location>
</feature>
<feature type="strand" evidence="37">
    <location>
        <begin position="24"/>
        <end position="31"/>
    </location>
</feature>
<feature type="turn" evidence="37">
    <location>
        <begin position="32"/>
        <end position="34"/>
    </location>
</feature>
<feature type="strand" evidence="37">
    <location>
        <begin position="37"/>
        <end position="44"/>
    </location>
</feature>
<feature type="helix" evidence="37">
    <location>
        <begin position="45"/>
        <end position="47"/>
    </location>
</feature>
<feature type="helix" evidence="37">
    <location>
        <begin position="50"/>
        <end position="65"/>
    </location>
</feature>
<feature type="strand" evidence="37">
    <location>
        <begin position="74"/>
        <end position="79"/>
    </location>
</feature>
<feature type="strand" evidence="37">
    <location>
        <begin position="81"/>
        <end position="88"/>
    </location>
</feature>
<feature type="helix" evidence="37">
    <location>
        <begin position="96"/>
        <end position="103"/>
    </location>
</feature>
<feature type="helix" evidence="37">
    <location>
        <begin position="108"/>
        <end position="127"/>
    </location>
</feature>
<feature type="helix" evidence="37">
    <location>
        <begin position="137"/>
        <end position="139"/>
    </location>
</feature>
<feature type="strand" evidence="37">
    <location>
        <begin position="140"/>
        <end position="146"/>
    </location>
</feature>
<feature type="strand" evidence="37">
    <location>
        <begin position="151"/>
        <end position="153"/>
    </location>
</feature>
<feature type="helix" evidence="37">
    <location>
        <begin position="175"/>
        <end position="177"/>
    </location>
</feature>
<feature type="helix" evidence="37">
    <location>
        <begin position="180"/>
        <end position="183"/>
    </location>
</feature>
<feature type="helix" evidence="37">
    <location>
        <begin position="191"/>
        <end position="206"/>
    </location>
</feature>
<feature type="helix" evidence="37">
    <location>
        <begin position="216"/>
        <end position="225"/>
    </location>
</feature>
<feature type="turn" evidence="37">
    <location>
        <begin position="232"/>
        <end position="237"/>
    </location>
</feature>
<feature type="helix" evidence="37">
    <location>
        <begin position="240"/>
        <end position="249"/>
    </location>
</feature>
<feature type="turn" evidence="37">
    <location>
        <begin position="254"/>
        <end position="256"/>
    </location>
</feature>
<feature type="helix" evidence="37">
    <location>
        <begin position="260"/>
        <end position="263"/>
    </location>
</feature>
<feature type="helix" evidence="37">
    <location>
        <begin position="267"/>
        <end position="270"/>
    </location>
</feature>
<feature type="helix" evidence="37">
    <location>
        <begin position="275"/>
        <end position="277"/>
    </location>
</feature>
<feature type="helix" evidence="35">
    <location>
        <begin position="282"/>
        <end position="309"/>
    </location>
</feature>
<feature type="helix" evidence="36">
    <location>
        <begin position="585"/>
        <end position="604"/>
    </location>
</feature>
<feature type="helix" evidence="36">
    <location>
        <begin position="607"/>
        <end position="613"/>
    </location>
</feature>
<feature type="strand" evidence="36">
    <location>
        <begin position="614"/>
        <end position="621"/>
    </location>
</feature>
<feature type="helix" evidence="36">
    <location>
        <begin position="623"/>
        <end position="625"/>
    </location>
</feature>
<feature type="helix" evidence="36">
    <location>
        <begin position="634"/>
        <end position="637"/>
    </location>
</feature>
<feature type="strand" evidence="36">
    <location>
        <begin position="640"/>
        <end position="642"/>
    </location>
</feature>
<feature type="strand" evidence="36">
    <location>
        <begin position="649"/>
        <end position="660"/>
    </location>
</feature>
<feature type="turn" evidence="36">
    <location>
        <begin position="661"/>
        <end position="663"/>
    </location>
</feature>
<feature type="strand" evidence="36">
    <location>
        <begin position="664"/>
        <end position="676"/>
    </location>
</feature>
<feature type="strand" evidence="36">
    <location>
        <begin position="682"/>
        <end position="696"/>
    </location>
</feature>
<feature type="strand" evidence="36">
    <location>
        <begin position="699"/>
        <end position="708"/>
    </location>
</feature>
<sequence length="720" mass="79927">MMNASTKFSDNYDVKEELGKGAFSVVRRCVHKTTGLEFAAKIINTKKLSARDFQKLEREARICRKLQHPNIVRLHDSIQEESFHYLVFDLVTGGELFEDIVAREFYSEADASHCIQQILESIAYCHSNGIVHRDLKPENLLLASKAKGAAVKLADFGLAIEVNDSEAWHGFAGTPGYLSPEVLKKDPYSKPVDIWACGVILYILLVGYPPFWDEDQHRLYAQIKAGAYDYPSPEWDTVTPEAKSLIDSMLTVNPKKRITADQALKVPWICNRERVASAIHRQDTVDCLKKFNARRKLKAAISAVKMVTRMSGVLRTSDSTGSVASNGSTTHDASQVAGTSSQPTSPAAEVYPNVLLFNPQKFPRNCVHPFTTHPYYSPKESSKKKLFFTLLFEVCPHTSRSHILLRDNTKNIYHPYHCFTNKMSNYERAAPSSHGSSTTKKIANAIADLVIRRSSPSIRRKTEADVHNSNRNRKVSAPANLQHALVPVIDVVVATGALASSSVDNLSASTSSDLGRNLLNKKEQGPPSTIKESSESSQTIDDNDSEKGGGQLKHENTVVRADGATGIVSSSNSSTASKSSSTNLSAQKQDIVRVTQTLLDAISCKDFETYTRLCDTSMTCFEPEALGNLIEGIEFHRFYFDGNRKNQVHTTMLNPNVHIIGEDAACVAYVKLTQFLDRNGEAHTRQSQESRVWSKKQGRWVCVHVHRSTQPSTNTTVSEF</sequence>
<dbReference type="EC" id="2.7.11.17"/>
<dbReference type="EMBL" id="AF180735">
    <property type="protein sequence ID" value="AAD53949.1"/>
    <property type="molecule type" value="mRNA"/>
</dbReference>
<dbReference type="EMBL" id="AF233262">
    <property type="protein sequence ID" value="AAF63320.1"/>
    <property type="molecule type" value="mRNA"/>
</dbReference>
<dbReference type="EMBL" id="AF233263">
    <property type="protein sequence ID" value="AAF63321.1"/>
    <property type="molecule type" value="mRNA"/>
</dbReference>
<dbReference type="EMBL" id="AF233264">
    <property type="protein sequence ID" value="AAF63322.1"/>
    <property type="molecule type" value="mRNA"/>
</dbReference>
<dbReference type="EMBL" id="AF233265">
    <property type="protein sequence ID" value="AAF63323.1"/>
    <property type="molecule type" value="mRNA"/>
</dbReference>
<dbReference type="EMBL" id="AF233266">
    <property type="protein sequence ID" value="AAF63324.1"/>
    <property type="molecule type" value="mRNA"/>
</dbReference>
<dbReference type="EMBL" id="AF233267">
    <property type="protein sequence ID" value="AAF63325.1"/>
    <property type="molecule type" value="mRNA"/>
</dbReference>
<dbReference type="EMBL" id="AF255956">
    <property type="protein sequence ID" value="AAF71543.1"/>
    <property type="molecule type" value="mRNA"/>
</dbReference>
<dbReference type="EMBL" id="Z70279">
    <property type="protein sequence ID" value="CAA94242.3"/>
    <property type="molecule type" value="Genomic_DNA"/>
</dbReference>
<dbReference type="EMBL" id="Z70279">
    <property type="protein sequence ID" value="CAA94243.3"/>
    <property type="molecule type" value="Genomic_DNA"/>
</dbReference>
<dbReference type="EMBL" id="AL023841">
    <property type="protein sequence ID" value="CAA94243.3"/>
    <property type="status" value="JOINED"/>
    <property type="molecule type" value="Genomic_DNA"/>
</dbReference>
<dbReference type="EMBL" id="Z70279">
    <property type="protein sequence ID" value="CAC42322.1"/>
    <property type="molecule type" value="Genomic_DNA"/>
</dbReference>
<dbReference type="EMBL" id="AL023841">
    <property type="protein sequence ID" value="CAC42322.1"/>
    <property type="status" value="JOINED"/>
    <property type="molecule type" value="Genomic_DNA"/>
</dbReference>
<dbReference type="EMBL" id="Z70279">
    <property type="protein sequence ID" value="CAC42323.1"/>
    <property type="molecule type" value="Genomic_DNA"/>
</dbReference>
<dbReference type="EMBL" id="AL023841">
    <property type="protein sequence ID" value="CAC42323.1"/>
    <property type="status" value="JOINED"/>
    <property type="molecule type" value="Genomic_DNA"/>
</dbReference>
<dbReference type="EMBL" id="Z70279">
    <property type="protein sequence ID" value="CAC42324.1"/>
    <property type="molecule type" value="Genomic_DNA"/>
</dbReference>
<dbReference type="EMBL" id="AL023841">
    <property type="protein sequence ID" value="CAC42324.1"/>
    <property type="status" value="JOINED"/>
    <property type="molecule type" value="Genomic_DNA"/>
</dbReference>
<dbReference type="EMBL" id="Z70279">
    <property type="protein sequence ID" value="CAC42325.1"/>
    <property type="molecule type" value="Genomic_DNA"/>
</dbReference>
<dbReference type="EMBL" id="AL023841">
    <property type="protein sequence ID" value="CAC42325.1"/>
    <property type="status" value="JOINED"/>
    <property type="molecule type" value="Genomic_DNA"/>
</dbReference>
<dbReference type="EMBL" id="Z70279">
    <property type="protein sequence ID" value="CAC42326.1"/>
    <property type="molecule type" value="Genomic_DNA"/>
</dbReference>
<dbReference type="EMBL" id="AL023841">
    <property type="protein sequence ID" value="CAC42326.1"/>
    <property type="status" value="JOINED"/>
    <property type="molecule type" value="Genomic_DNA"/>
</dbReference>
<dbReference type="EMBL" id="Z70279">
    <property type="protein sequence ID" value="CAC42327.1"/>
    <property type="molecule type" value="Genomic_DNA"/>
</dbReference>
<dbReference type="EMBL" id="AL023841">
    <property type="protein sequence ID" value="CAC42327.1"/>
    <property type="status" value="JOINED"/>
    <property type="molecule type" value="Genomic_DNA"/>
</dbReference>
<dbReference type="EMBL" id="Z70279">
    <property type="protein sequence ID" value="CAC42328.1"/>
    <property type="molecule type" value="Genomic_DNA"/>
</dbReference>
<dbReference type="EMBL" id="AL023841">
    <property type="protein sequence ID" value="CAC42328.1"/>
    <property type="status" value="JOINED"/>
    <property type="molecule type" value="Genomic_DNA"/>
</dbReference>
<dbReference type="EMBL" id="Z70279">
    <property type="protein sequence ID" value="CAC42329.1"/>
    <property type="molecule type" value="Genomic_DNA"/>
</dbReference>
<dbReference type="EMBL" id="AL023841">
    <property type="protein sequence ID" value="CAC42329.1"/>
    <property type="status" value="JOINED"/>
    <property type="molecule type" value="Genomic_DNA"/>
</dbReference>
<dbReference type="EMBL" id="Z70279">
    <property type="protein sequence ID" value="CAE46679.1"/>
    <property type="molecule type" value="Genomic_DNA"/>
</dbReference>
<dbReference type="EMBL" id="Z70279">
    <property type="protein sequence ID" value="CAN86910.1"/>
    <property type="molecule type" value="Genomic_DNA"/>
</dbReference>
<dbReference type="EMBL" id="Z70279">
    <property type="protein sequence ID" value="CAO82047.1"/>
    <property type="molecule type" value="Genomic_DNA"/>
</dbReference>
<dbReference type="EMBL" id="Z70279">
    <property type="protein sequence ID" value="CAQ58116.1"/>
    <property type="molecule type" value="Genomic_DNA"/>
</dbReference>
<dbReference type="PIR" id="B88809">
    <property type="entry name" value="B88809"/>
</dbReference>
<dbReference type="PIR" id="T23616">
    <property type="entry name" value="T23616"/>
</dbReference>
<dbReference type="RefSeq" id="NP_001023293.2">
    <molecule id="O62305-2"/>
    <property type="nucleotide sequence ID" value="NM_001028122.5"/>
</dbReference>
<dbReference type="RefSeq" id="NP_001023294.1">
    <property type="nucleotide sequence ID" value="NM_001028123.3"/>
</dbReference>
<dbReference type="RefSeq" id="NP_001023296.1">
    <property type="nucleotide sequence ID" value="NM_001028125.3"/>
</dbReference>
<dbReference type="RefSeq" id="NP_001023297.1">
    <property type="nucleotide sequence ID" value="NM_001028126.3"/>
</dbReference>
<dbReference type="RefSeq" id="NP_001023298.1">
    <molecule id="O62305-6"/>
    <property type="nucleotide sequence ID" value="NM_001028127.6"/>
</dbReference>
<dbReference type="RefSeq" id="NP_001023299.1">
    <property type="nucleotide sequence ID" value="NM_001028128.3"/>
</dbReference>
<dbReference type="RefSeq" id="NP_001023300.1">
    <property type="nucleotide sequence ID" value="NM_001028129.3"/>
</dbReference>
<dbReference type="RefSeq" id="NP_001023301.1">
    <property type="nucleotide sequence ID" value="NM_001028130.3"/>
</dbReference>
<dbReference type="RefSeq" id="NP_001023302.1">
    <property type="nucleotide sequence ID" value="NM_001028131.3"/>
</dbReference>
<dbReference type="RefSeq" id="NP_001023303.1">
    <property type="nucleotide sequence ID" value="NM_001028132.3"/>
</dbReference>
<dbReference type="RefSeq" id="NP_001023304.1">
    <molecule id="O62305-12"/>
    <property type="nucleotide sequence ID" value="NM_001028133.5"/>
</dbReference>
<dbReference type="RefSeq" id="NP_001122788.1">
    <molecule id="O62305-13"/>
    <property type="nucleotide sequence ID" value="NM_001129316.4"/>
</dbReference>
<dbReference type="RefSeq" id="NP_001122789.1">
    <molecule id="O62305-14"/>
    <property type="nucleotide sequence ID" value="NM_001129317.5"/>
</dbReference>
<dbReference type="RefSeq" id="NP_001129863.1">
    <molecule id="O62305-15"/>
    <property type="nucleotide sequence ID" value="NM_001136391.4"/>
</dbReference>
<dbReference type="RefSeq" id="NP_001359633.1">
    <molecule id="O62305-5"/>
    <property type="nucleotide sequence ID" value="NM_001372918.3"/>
</dbReference>
<dbReference type="RefSeq" id="NP_001366992.1">
    <molecule id="O62305-9"/>
    <property type="nucleotide sequence ID" value="NM_001380442.1"/>
</dbReference>
<dbReference type="RefSeq" id="NP_001366993.1">
    <molecule id="O62305-7"/>
    <property type="nucleotide sequence ID" value="NM_001380439.3"/>
</dbReference>
<dbReference type="RefSeq" id="NP_001366994.1">
    <molecule id="O62305-8"/>
    <property type="nucleotide sequence ID" value="NM_001380440.3"/>
</dbReference>
<dbReference type="RefSeq" id="NP_001366996.1">
    <molecule id="O62305-10"/>
    <property type="nucleotide sequence ID" value="NM_001380441.3"/>
</dbReference>
<dbReference type="RefSeq" id="NP_001366997.1">
    <molecule id="O62305-11"/>
    <property type="nucleotide sequence ID" value="NM_001380443.1"/>
</dbReference>
<dbReference type="RefSeq" id="NP_001369918.1">
    <molecule id="O62305-3"/>
    <property type="nucleotide sequence ID" value="NM_001383187.2"/>
</dbReference>
<dbReference type="RefSeq" id="NP_001379280.1">
    <molecule id="O62305-4"/>
    <property type="nucleotide sequence ID" value="NM_001392387.1"/>
</dbReference>
<dbReference type="PDB" id="2BDW">
    <property type="method" value="X-ray"/>
    <property type="resolution" value="1.80 A"/>
    <property type="chains" value="A/B=1-298, A/B=514-543"/>
</dbReference>
<dbReference type="PDB" id="2F86">
    <property type="method" value="X-ray"/>
    <property type="resolution" value="2.64 A"/>
    <property type="chains" value="B/D/F/H/J/L/N=585-720"/>
</dbReference>
<dbReference type="PDB" id="3KK8">
    <property type="method" value="X-ray"/>
    <property type="resolution" value="1.72 A"/>
    <property type="chains" value="A=5-288"/>
</dbReference>
<dbReference type="PDB" id="3KK9">
    <property type="method" value="X-ray"/>
    <property type="resolution" value="3.21 A"/>
    <property type="chains" value="A=6-287"/>
</dbReference>
<dbReference type="PDB" id="3KL8">
    <property type="method" value="X-ray"/>
    <property type="resolution" value="3.37 A"/>
    <property type="chains" value="A/C/E/G/I=5-273"/>
</dbReference>
<dbReference type="PDBsum" id="2BDW"/>
<dbReference type="PDBsum" id="2F86"/>
<dbReference type="PDBsum" id="3KK8"/>
<dbReference type="PDBsum" id="3KK9"/>
<dbReference type="PDBsum" id="3KL8"/>
<dbReference type="SMR" id="O62305"/>
<dbReference type="BioGRID" id="43023">
    <property type="interactions" value="28"/>
</dbReference>
<dbReference type="DIP" id="DIP-25971N"/>
<dbReference type="DIP" id="DIP-58986N"/>
<dbReference type="FunCoup" id="O62305">
    <property type="interactions" value="1168"/>
</dbReference>
<dbReference type="IntAct" id="O62305">
    <property type="interactions" value="10"/>
</dbReference>
<dbReference type="MINT" id="O62305"/>
<dbReference type="STRING" id="6239.K11E8.1r.1"/>
<dbReference type="iPTMnet" id="O62305"/>
<dbReference type="PeptideAtlas" id="O62305"/>
<dbReference type="EnsemblMetazoa" id="K11E8.1a.1">
    <molecule id="O62305-2"/>
    <property type="protein sequence ID" value="K11E8.1a.1"/>
    <property type="gene ID" value="WBGene00006779"/>
</dbReference>
<dbReference type="EnsemblMetazoa" id="K11E8.1b.1">
    <molecule id="O62305-3"/>
    <property type="protein sequence ID" value="K11E8.1b.1"/>
    <property type="gene ID" value="WBGene00006779"/>
</dbReference>
<dbReference type="EnsemblMetazoa" id="K11E8.1b.2">
    <molecule id="O62305-3"/>
    <property type="protein sequence ID" value="K11E8.1b.2"/>
    <property type="gene ID" value="WBGene00006779"/>
</dbReference>
<dbReference type="EnsemblMetazoa" id="K11E8.1b.3">
    <molecule id="O62305-3"/>
    <property type="protein sequence ID" value="K11E8.1b.3"/>
    <property type="gene ID" value="WBGene00006779"/>
</dbReference>
<dbReference type="EnsemblMetazoa" id="K11E8.1d.1">
    <molecule id="O62305-4"/>
    <property type="protein sequence ID" value="K11E8.1d.1"/>
    <property type="gene ID" value="WBGene00006779"/>
</dbReference>
<dbReference type="EnsemblMetazoa" id="K11E8.1d.2">
    <molecule id="O62305-4"/>
    <property type="protein sequence ID" value="K11E8.1d.2"/>
    <property type="gene ID" value="WBGene00006779"/>
</dbReference>
<dbReference type="EnsemblMetazoa" id="K11E8.1e.1">
    <molecule id="O62305-5"/>
    <property type="protein sequence ID" value="K11E8.1e.1"/>
    <property type="gene ID" value="WBGene00006779"/>
</dbReference>
<dbReference type="EnsemblMetazoa" id="K11E8.1e.2">
    <molecule id="O62305-5"/>
    <property type="protein sequence ID" value="K11E8.1e.2"/>
    <property type="gene ID" value="WBGene00006779"/>
</dbReference>
<dbReference type="EnsemblMetazoa" id="K11E8.1f.1">
    <molecule id="O62305-6"/>
    <property type="protein sequence ID" value="K11E8.1f.1"/>
    <property type="gene ID" value="WBGene00006779"/>
</dbReference>
<dbReference type="EnsemblMetazoa" id="K11E8.1f.2">
    <molecule id="O62305-6"/>
    <property type="protein sequence ID" value="K11E8.1f.2"/>
    <property type="gene ID" value="WBGene00006779"/>
</dbReference>
<dbReference type="EnsemblMetazoa" id="K11E8.1g.1">
    <molecule id="O62305-7"/>
    <property type="protein sequence ID" value="K11E8.1g.1"/>
    <property type="gene ID" value="WBGene00006779"/>
</dbReference>
<dbReference type="EnsemblMetazoa" id="K11E8.1g.2">
    <molecule id="O62305-7"/>
    <property type="protein sequence ID" value="K11E8.1g.2"/>
    <property type="gene ID" value="WBGene00006779"/>
</dbReference>
<dbReference type="EnsemblMetazoa" id="K11E8.1h.1">
    <molecule id="O62305-8"/>
    <property type="protein sequence ID" value="K11E8.1h.1"/>
    <property type="gene ID" value="WBGene00006779"/>
</dbReference>
<dbReference type="EnsemblMetazoa" id="K11E8.1h.2">
    <molecule id="O62305-8"/>
    <property type="protein sequence ID" value="K11E8.1h.2"/>
    <property type="gene ID" value="WBGene00006779"/>
</dbReference>
<dbReference type="EnsemblMetazoa" id="K11E8.1i.1">
    <molecule id="O62305-9"/>
    <property type="protein sequence ID" value="K11E8.1i.1"/>
    <property type="gene ID" value="WBGene00006779"/>
</dbReference>
<dbReference type="EnsemblMetazoa" id="K11E8.1k.1">
    <molecule id="O62305-10"/>
    <property type="protein sequence ID" value="K11E8.1k.1"/>
    <property type="gene ID" value="WBGene00006779"/>
</dbReference>
<dbReference type="EnsemblMetazoa" id="K11E8.1l.1">
    <molecule id="O62305-11"/>
    <property type="protein sequence ID" value="K11E8.1l.1"/>
    <property type="gene ID" value="WBGene00006779"/>
</dbReference>
<dbReference type="EnsemblMetazoa" id="K11E8.1m.1">
    <molecule id="O62305-12"/>
    <property type="protein sequence ID" value="K11E8.1m.1"/>
    <property type="gene ID" value="WBGene00006779"/>
</dbReference>
<dbReference type="EnsemblMetazoa" id="K11E8.1n.1">
    <molecule id="O62305-13"/>
    <property type="protein sequence ID" value="K11E8.1n.1"/>
    <property type="gene ID" value="WBGene00006779"/>
</dbReference>
<dbReference type="EnsemblMetazoa" id="K11E8.1o.1">
    <molecule id="O62305-14"/>
    <property type="protein sequence ID" value="K11E8.1o.1"/>
    <property type="gene ID" value="WBGene00006779"/>
</dbReference>
<dbReference type="EnsemblMetazoa" id="K11E8.1p.1">
    <molecule id="O62305-15"/>
    <property type="protein sequence ID" value="K11E8.1p.1"/>
    <property type="gene ID" value="WBGene00006779"/>
</dbReference>
<dbReference type="GeneID" id="177921"/>
<dbReference type="KEGG" id="cel:CELE_K11E8.1"/>
<dbReference type="UCSC" id="K11E8.1a.1">
    <property type="organism name" value="c. elegans"/>
</dbReference>
<dbReference type="AGR" id="WB:WBGene00006779"/>
<dbReference type="CTD" id="177921"/>
<dbReference type="WormBase" id="K11E8.1a">
    <molecule id="O62305-2"/>
    <property type="protein sequence ID" value="CE42693"/>
    <property type="gene ID" value="WBGene00006779"/>
    <property type="gene designation" value="unc-43"/>
</dbReference>
<dbReference type="WormBase" id="K11E8.1b">
    <molecule id="O62305-3"/>
    <property type="protein sequence ID" value="CE28052"/>
    <property type="gene ID" value="WBGene00006779"/>
    <property type="gene designation" value="unc-43"/>
</dbReference>
<dbReference type="WormBase" id="K11E8.1d">
    <molecule id="O62305-4"/>
    <property type="protein sequence ID" value="CE28054"/>
    <property type="gene ID" value="WBGene00006779"/>
    <property type="gene designation" value="unc-43"/>
</dbReference>
<dbReference type="WormBase" id="K11E8.1e">
    <molecule id="O62305-5"/>
    <property type="protein sequence ID" value="CE28055"/>
    <property type="gene ID" value="WBGene00006779"/>
    <property type="gene designation" value="unc-43"/>
</dbReference>
<dbReference type="WormBase" id="K11E8.1f">
    <molecule id="O62305-6"/>
    <property type="protein sequence ID" value="CE28056"/>
    <property type="gene ID" value="WBGene00006779"/>
    <property type="gene designation" value="unc-43"/>
</dbReference>
<dbReference type="WormBase" id="K11E8.1g">
    <molecule id="O62305-7"/>
    <property type="protein sequence ID" value="CE28057"/>
    <property type="gene ID" value="WBGene00006779"/>
    <property type="gene designation" value="unc-43"/>
</dbReference>
<dbReference type="WormBase" id="K11E8.1h">
    <molecule id="O62305-8"/>
    <property type="protein sequence ID" value="CE28058"/>
    <property type="gene ID" value="WBGene00006779"/>
    <property type="gene designation" value="unc-43"/>
</dbReference>
<dbReference type="WormBase" id="K11E8.1i">
    <molecule id="O62305-9"/>
    <property type="protein sequence ID" value="CE28059"/>
    <property type="gene ID" value="WBGene00006779"/>
    <property type="gene designation" value="unc-43"/>
</dbReference>
<dbReference type="WormBase" id="K11E8.1k">
    <molecule id="O62305-10"/>
    <property type="protein sequence ID" value="CE28060"/>
    <property type="gene ID" value="WBGene00006779"/>
    <property type="gene designation" value="unc-43"/>
</dbReference>
<dbReference type="WormBase" id="K11E8.1l">
    <molecule id="O62305-11"/>
    <property type="protein sequence ID" value="CE28061"/>
    <property type="gene ID" value="WBGene00006779"/>
    <property type="gene designation" value="unc-43"/>
</dbReference>
<dbReference type="WormBase" id="K11E8.1m">
    <molecule id="O62305-12"/>
    <property type="protein sequence ID" value="CE35590"/>
    <property type="gene ID" value="WBGene00006779"/>
    <property type="gene designation" value="unc-43"/>
</dbReference>
<dbReference type="WormBase" id="K11E8.1n">
    <molecule id="O62305-13"/>
    <property type="protein sequence ID" value="CE40979"/>
    <property type="gene ID" value="WBGene00006779"/>
    <property type="gene designation" value="unc-43"/>
</dbReference>
<dbReference type="WormBase" id="K11E8.1o">
    <molecule id="O62305-14"/>
    <property type="protein sequence ID" value="CE41430"/>
    <property type="gene ID" value="WBGene00006779"/>
    <property type="gene designation" value="unc-43"/>
</dbReference>
<dbReference type="WormBase" id="K11E8.1p">
    <molecule id="O62305-15"/>
    <property type="protein sequence ID" value="CE42670"/>
    <property type="gene ID" value="WBGene00006779"/>
    <property type="gene designation" value="unc-43"/>
</dbReference>
<dbReference type="eggNOG" id="KOG0033">
    <property type="taxonomic scope" value="Eukaryota"/>
</dbReference>
<dbReference type="GeneTree" id="ENSGT00940000159769"/>
<dbReference type="InParanoid" id="O62305"/>
<dbReference type="OrthoDB" id="442176at2759"/>
<dbReference type="PhylomeDB" id="O62305"/>
<dbReference type="BRENDA" id="2.7.11.17">
    <property type="organism ID" value="1045"/>
</dbReference>
<dbReference type="Reactome" id="R-CEL-3371571">
    <property type="pathway name" value="HSF1-dependent transactivation"/>
</dbReference>
<dbReference type="Reactome" id="R-CEL-4086398">
    <property type="pathway name" value="Ca2+ pathway"/>
</dbReference>
<dbReference type="Reactome" id="R-CEL-438066">
    <property type="pathway name" value="Unblocking of NMDA receptors, glutamate binding and activation"/>
</dbReference>
<dbReference type="Reactome" id="R-CEL-5578775">
    <property type="pathway name" value="Ion homeostasis"/>
</dbReference>
<dbReference type="Reactome" id="R-CEL-936837">
    <property type="pathway name" value="Ion transport by P-type ATPases"/>
</dbReference>
<dbReference type="SignaLink" id="O62305"/>
<dbReference type="EvolutionaryTrace" id="O62305"/>
<dbReference type="PRO" id="PR:O62305"/>
<dbReference type="Proteomes" id="UP000001940">
    <property type="component" value="Chromosome IV"/>
</dbReference>
<dbReference type="Bgee" id="WBGene00006779">
    <property type="expression patterns" value="Expressed in pharyngeal muscle cell (C elegans) and 3 other cell types or tissues"/>
</dbReference>
<dbReference type="ExpressionAtlas" id="O62305">
    <property type="expression patterns" value="baseline and differential"/>
</dbReference>
<dbReference type="GO" id="GO:1904115">
    <property type="term" value="C:axon cytoplasm"/>
    <property type="evidence" value="ECO:0000314"/>
    <property type="project" value="WormBase"/>
</dbReference>
<dbReference type="GO" id="GO:0005737">
    <property type="term" value="C:cytoplasm"/>
    <property type="evidence" value="ECO:0000318"/>
    <property type="project" value="GO_Central"/>
</dbReference>
<dbReference type="GO" id="GO:0043005">
    <property type="term" value="C:neuron projection"/>
    <property type="evidence" value="ECO:0000314"/>
    <property type="project" value="WormBase"/>
</dbReference>
<dbReference type="GO" id="GO:0043204">
    <property type="term" value="C:perikaryon"/>
    <property type="evidence" value="ECO:0007669"/>
    <property type="project" value="UniProtKB-SubCell"/>
</dbReference>
<dbReference type="GO" id="GO:0014069">
    <property type="term" value="C:postsynaptic density"/>
    <property type="evidence" value="ECO:0000318"/>
    <property type="project" value="GO_Central"/>
</dbReference>
<dbReference type="GO" id="GO:0005524">
    <property type="term" value="F:ATP binding"/>
    <property type="evidence" value="ECO:0007669"/>
    <property type="project" value="UniProtKB-KW"/>
</dbReference>
<dbReference type="GO" id="GO:0004683">
    <property type="term" value="F:calcium/calmodulin-dependent protein kinase activity"/>
    <property type="evidence" value="ECO:0000314"/>
    <property type="project" value="WormBase"/>
</dbReference>
<dbReference type="GO" id="GO:0005516">
    <property type="term" value="F:calmodulin binding"/>
    <property type="evidence" value="ECO:0000318"/>
    <property type="project" value="GO_Central"/>
</dbReference>
<dbReference type="GO" id="GO:0042802">
    <property type="term" value="F:identical protein binding"/>
    <property type="evidence" value="ECO:0000353"/>
    <property type="project" value="IntAct"/>
</dbReference>
<dbReference type="GO" id="GO:0046872">
    <property type="term" value="F:metal ion binding"/>
    <property type="evidence" value="ECO:0007669"/>
    <property type="project" value="UniProtKB-KW"/>
</dbReference>
<dbReference type="GO" id="GO:0106310">
    <property type="term" value="F:protein serine kinase activity"/>
    <property type="evidence" value="ECO:0007669"/>
    <property type="project" value="RHEA"/>
</dbReference>
<dbReference type="GO" id="GO:0044325">
    <property type="term" value="F:transmembrane transporter binding"/>
    <property type="evidence" value="ECO:0000353"/>
    <property type="project" value="WormBase"/>
</dbReference>
<dbReference type="GO" id="GO:0000165">
    <property type="term" value="P:MAPK cascade"/>
    <property type="evidence" value="ECO:0000315"/>
    <property type="project" value="WormBase"/>
</dbReference>
<dbReference type="GO" id="GO:0072375">
    <property type="term" value="P:medium-term memory"/>
    <property type="evidence" value="ECO:0000315"/>
    <property type="project" value="WormBase"/>
</dbReference>
<dbReference type="GO" id="GO:0010628">
    <property type="term" value="P:positive regulation of gene expression"/>
    <property type="evidence" value="ECO:0000315"/>
    <property type="project" value="UniProtKB"/>
</dbReference>
<dbReference type="GO" id="GO:0048168">
    <property type="term" value="P:regulation of neuronal synaptic plasticity"/>
    <property type="evidence" value="ECO:0000318"/>
    <property type="project" value="GO_Central"/>
</dbReference>
<dbReference type="GO" id="GO:1903076">
    <property type="term" value="P:regulation of protein localization to plasma membrane"/>
    <property type="evidence" value="ECO:0000318"/>
    <property type="project" value="GO_Central"/>
</dbReference>
<dbReference type="GO" id="GO:0042427">
    <property type="term" value="P:serotonin biosynthetic process"/>
    <property type="evidence" value="ECO:0000315"/>
    <property type="project" value="UniProtKB"/>
</dbReference>
<dbReference type="CDD" id="cd14086">
    <property type="entry name" value="STKc_CaMKII"/>
    <property type="match status" value="1"/>
</dbReference>
<dbReference type="FunFam" id="3.10.450.50:FF:000009">
    <property type="entry name" value="Calcium/calmodulin-dependent protein kinase type II"/>
    <property type="match status" value="1"/>
</dbReference>
<dbReference type="FunFam" id="1.10.510.10:FF:000001">
    <property type="entry name" value="Calcium/calmodulin-dependent protein kinase type II subunit delta"/>
    <property type="match status" value="1"/>
</dbReference>
<dbReference type="FunFam" id="3.30.200.20:FF:000002">
    <property type="entry name" value="Calcium/calmodulin-dependent protein kinase type II subunit delta isoform 2"/>
    <property type="match status" value="1"/>
</dbReference>
<dbReference type="Gene3D" id="3.10.450.50">
    <property type="match status" value="1"/>
</dbReference>
<dbReference type="Gene3D" id="6.10.140.620">
    <property type="match status" value="1"/>
</dbReference>
<dbReference type="Gene3D" id="3.30.200.20">
    <property type="entry name" value="Phosphorylase Kinase, domain 1"/>
    <property type="match status" value="1"/>
</dbReference>
<dbReference type="Gene3D" id="1.10.510.10">
    <property type="entry name" value="Transferase(Phosphotransferase) domain 1"/>
    <property type="match status" value="1"/>
</dbReference>
<dbReference type="InterPro" id="IPR013543">
    <property type="entry name" value="Ca/CaM-dep_prot_kinase-assoc"/>
</dbReference>
<dbReference type="InterPro" id="IPR011009">
    <property type="entry name" value="Kinase-like_dom_sf"/>
</dbReference>
<dbReference type="InterPro" id="IPR032710">
    <property type="entry name" value="NTF2-like_dom_sf"/>
</dbReference>
<dbReference type="InterPro" id="IPR000719">
    <property type="entry name" value="Prot_kinase_dom"/>
</dbReference>
<dbReference type="InterPro" id="IPR017441">
    <property type="entry name" value="Protein_kinase_ATP_BS"/>
</dbReference>
<dbReference type="InterPro" id="IPR008271">
    <property type="entry name" value="Ser/Thr_kinase_AS"/>
</dbReference>
<dbReference type="PANTHER" id="PTHR24347">
    <property type="entry name" value="SERINE/THREONINE-PROTEIN KINASE"/>
    <property type="match status" value="1"/>
</dbReference>
<dbReference type="Pfam" id="PF08332">
    <property type="entry name" value="CaMKII_AD"/>
    <property type="match status" value="1"/>
</dbReference>
<dbReference type="Pfam" id="PF00069">
    <property type="entry name" value="Pkinase"/>
    <property type="match status" value="1"/>
</dbReference>
<dbReference type="SMART" id="SM00220">
    <property type="entry name" value="S_TKc"/>
    <property type="match status" value="1"/>
</dbReference>
<dbReference type="SUPFAM" id="SSF54427">
    <property type="entry name" value="NTF2-like"/>
    <property type="match status" value="1"/>
</dbReference>
<dbReference type="SUPFAM" id="SSF56112">
    <property type="entry name" value="Protein kinase-like (PK-like)"/>
    <property type="match status" value="1"/>
</dbReference>
<dbReference type="PROSITE" id="PS00107">
    <property type="entry name" value="PROTEIN_KINASE_ATP"/>
    <property type="match status" value="1"/>
</dbReference>
<dbReference type="PROSITE" id="PS50011">
    <property type="entry name" value="PROTEIN_KINASE_DOM"/>
    <property type="match status" value="1"/>
</dbReference>
<dbReference type="PROSITE" id="PS00108">
    <property type="entry name" value="PROTEIN_KINASE_ST"/>
    <property type="match status" value="1"/>
</dbReference>
<proteinExistence type="evidence at protein level"/>
<evidence type="ECO:0000250" key="1">
    <source>
        <dbReference type="UniProtKB" id="P28523"/>
    </source>
</evidence>
<evidence type="ECO:0000255" key="2"/>
<evidence type="ECO:0000255" key="3">
    <source>
        <dbReference type="PROSITE-ProRule" id="PRU00159"/>
    </source>
</evidence>
<evidence type="ECO:0000256" key="4">
    <source>
        <dbReference type="SAM" id="MobiDB-lite"/>
    </source>
</evidence>
<evidence type="ECO:0000269" key="5">
    <source>
    </source>
</evidence>
<evidence type="ECO:0000269" key="6">
    <source>
    </source>
</evidence>
<evidence type="ECO:0000269" key="7">
    <source>
    </source>
</evidence>
<evidence type="ECO:0000269" key="8">
    <source>
    </source>
</evidence>
<evidence type="ECO:0000269" key="9">
    <source>
    </source>
</evidence>
<evidence type="ECO:0000269" key="10">
    <source>
    </source>
</evidence>
<evidence type="ECO:0000269" key="11">
    <source>
    </source>
</evidence>
<evidence type="ECO:0000269" key="12">
    <source>
    </source>
</evidence>
<evidence type="ECO:0000269" key="13">
    <source>
    </source>
</evidence>
<evidence type="ECO:0000269" key="14">
    <source>
    </source>
</evidence>
<evidence type="ECO:0000269" key="15">
    <source>
    </source>
</evidence>
<evidence type="ECO:0000269" key="16">
    <source>
    </source>
</evidence>
<evidence type="ECO:0000269" key="17">
    <source>
    </source>
</evidence>
<evidence type="ECO:0000269" key="18">
    <source>
    </source>
</evidence>
<evidence type="ECO:0000269" key="19">
    <source>
    </source>
</evidence>
<evidence type="ECO:0000269" key="20">
    <source>
    </source>
</evidence>
<evidence type="ECO:0000269" key="21">
    <source>
    </source>
</evidence>
<evidence type="ECO:0000269" key="22">
    <source>
    </source>
</evidence>
<evidence type="ECO:0000269" key="23">
    <source>
    </source>
</evidence>
<evidence type="ECO:0000269" key="24">
    <source>
    </source>
</evidence>
<evidence type="ECO:0000269" key="25">
    <source>
    </source>
</evidence>
<evidence type="ECO:0000269" key="26">
    <source>
    </source>
</evidence>
<evidence type="ECO:0000269" key="27">
    <source ref="2"/>
</evidence>
<evidence type="ECO:0000303" key="28">
    <source>
    </source>
</evidence>
<evidence type="ECO:0000303" key="29">
    <source>
    </source>
</evidence>
<evidence type="ECO:0000303" key="30">
    <source ref="2"/>
</evidence>
<evidence type="ECO:0000305" key="31"/>
<evidence type="ECO:0000312" key="32">
    <source>
        <dbReference type="EMBL" id="AAD53949.1"/>
    </source>
</evidence>
<evidence type="ECO:0000312" key="33">
    <source>
        <dbReference type="EMBL" id="AAF63321.1"/>
    </source>
</evidence>
<evidence type="ECO:0000312" key="34">
    <source>
        <dbReference type="EMBL" id="CAO82047.1"/>
    </source>
</evidence>
<evidence type="ECO:0007829" key="35">
    <source>
        <dbReference type="PDB" id="2BDW"/>
    </source>
</evidence>
<evidence type="ECO:0007829" key="36">
    <source>
        <dbReference type="PDB" id="2F86"/>
    </source>
</evidence>
<evidence type="ECO:0007829" key="37">
    <source>
        <dbReference type="PDB" id="3KK8"/>
    </source>
</evidence>
<comment type="function">
    <text evidence="5 8 9 11 12 15 16 17 19 20 21 22 23 24 25">Acts in the signaling of a variety of pathways and processes. Phosphorylates 'Ser-319' of daf-16 in response to stress signals, such as heat, starvation and oxidation, which plays a role in prolonging lifespan. Required for viability under chronic osmotic stress in which it acts downstream of osr-1. Has roles in locomotion, oocyte maturation, brood size, egg laying, defecation, meiotic maturation and neuronal cell fate specification. Required for the regulation of synaptic density and neuromuscular junction morphology. Regulates the synaptic trafficking of glr-1. Bidirectional modulator of neurotransmitter release with negative modulatory effects mainly mediated via slo-1 activation. Involved in activation of ADF neurons and increased tph-1 transcription following exposure to pathogenic bacteria which leads to learned olfactory aversion to the bacteria (PubMed:23325232, PubMed:23505381). Implicated in the muscle regulation of spicule protraction. In conjunction with egl-2 has a role in the suppression of mating behavior under food deprivation to encourage foraging. Involved in restricting str-2 expression to only one of the two AWC neurons. May suppress the functional response to an internal pacemaker, perhaps by modulating the activity of the IP3 receptor.</text>
</comment>
<comment type="catalytic activity">
    <reaction evidence="11">
        <text>L-seryl-[protein] + ATP = O-phospho-L-seryl-[protein] + ADP + H(+)</text>
        <dbReference type="Rhea" id="RHEA:17989"/>
        <dbReference type="Rhea" id="RHEA-COMP:9863"/>
        <dbReference type="Rhea" id="RHEA-COMP:11604"/>
        <dbReference type="ChEBI" id="CHEBI:15378"/>
        <dbReference type="ChEBI" id="CHEBI:29999"/>
        <dbReference type="ChEBI" id="CHEBI:30616"/>
        <dbReference type="ChEBI" id="CHEBI:83421"/>
        <dbReference type="ChEBI" id="CHEBI:456216"/>
        <dbReference type="EC" id="2.7.11.17"/>
    </reaction>
</comment>
<comment type="catalytic activity">
    <reaction evidence="11">
        <text>L-threonyl-[protein] + ATP = O-phospho-L-threonyl-[protein] + ADP + H(+)</text>
        <dbReference type="Rhea" id="RHEA:46608"/>
        <dbReference type="Rhea" id="RHEA-COMP:11060"/>
        <dbReference type="Rhea" id="RHEA-COMP:11605"/>
        <dbReference type="ChEBI" id="CHEBI:15378"/>
        <dbReference type="ChEBI" id="CHEBI:30013"/>
        <dbReference type="ChEBI" id="CHEBI:30616"/>
        <dbReference type="ChEBI" id="CHEBI:61977"/>
        <dbReference type="ChEBI" id="CHEBI:456216"/>
        <dbReference type="EC" id="2.7.11.17"/>
    </reaction>
</comment>
<comment type="cofactor">
    <cofactor evidence="11">
        <name>Mg(2+)</name>
        <dbReference type="ChEBI" id="CHEBI:18420"/>
    </cofactor>
</comment>
<comment type="activity regulation">
    <text evidence="13 18">Ca2(+)/calmodulin binding removes an autoinhibitory regulatory segment located C-terminal to the kinase domain. This releases the catalytic activity of the enzyme and makes accessible a regulatory residue Thr-284. Phosphorylation of Thr-284 by another kinase domain within the oligomeric holoenzyme keeps CaMKII active in the absence of Ca(2+)/calmodulin by preventing the rebinding of the regulatory segment to the kinase domain and by increasing the affinity of calmodulin for the enzyme. Can respond to high-frequency Ca(2+) pulses to become Ca(2+) independent.</text>
</comment>
<comment type="subunit">
    <text evidence="7 10 14 18 19">Dodecamer. Subunits are tightly packed around a central ring-shaped scaffold with extensive contacts between the regulatory segment of one kinase and the catalytic domain of another enabling cooperative activation of a subunit by the adjacent molecule (PubMed:16441656, PubMed:20139983). Interacts with and phosphorylates daf-16; the interaction promotes daf-16 nuclear localization. Interacts with egl-2 and tir-1 (PubMed:15625192, PubMed:21145946). Interacts with nsy-1 (PubMed:11336672).</text>
</comment>
<comment type="interaction">
    <interactant intactId="EBI-313095">
        <id>O62305</id>
    </interactant>
    <interactant intactId="EBI-326499">
        <id>P91409</id>
        <label>syx-4</label>
    </interactant>
    <organismsDiffer>false</organismsDiffer>
    <experiments>3</experiments>
</comment>
<comment type="interaction">
    <interactant intactId="EBI-313095">
        <id>O62305</id>
    </interactant>
    <interactant intactId="EBI-313095">
        <id>O62305</id>
        <label>unc-43</label>
    </interactant>
    <organismsDiffer>false</organismsDiffer>
    <experiments>5</experiments>
</comment>
<comment type="subcellular location">
    <subcellularLocation>
        <location evidence="11">Cytoplasm</location>
    </subcellularLocation>
    <subcellularLocation>
        <location evidence="10">Cell projection</location>
        <location evidence="10">Axon</location>
    </subcellularLocation>
    <subcellularLocation>
        <location evidence="10 11">Perikaryon</location>
    </subcellularLocation>
    <text evidence="10 11">Localizes at or near the Golgi apparatus (PubMed:16079277). Localizes to post-synaptic regions and is enriched in punctate structures in axons of AWC neurons where it co-localizes with tir-1. Localization is regulated by tir-1 (PubMed:15625192).</text>
</comment>
<comment type="alternative products">
    <event type="alternative splicing"/>
    <isoform>
        <id>O62305-1</id>
        <name evidence="26">c</name>
        <sequence type="displayed"/>
    </isoform>
    <isoform>
        <id>O62305-2</id>
        <name evidence="26">a</name>
        <sequence type="described" ref="VSP_039592 VSP_039608"/>
    </isoform>
    <isoform>
        <id>O62305-3</id>
        <name evidence="26">b</name>
        <sequence type="described" ref="VSP_039595 VSP_039596"/>
    </isoform>
    <isoform>
        <id>O62305-4</id>
        <name evidence="6 26">d</name>
        <sequence type="described" ref="VSP_039597 VSP_039603 VSP_039611"/>
    </isoform>
    <isoform>
        <id>O62305-5</id>
        <name evidence="26 27">e</name>
        <name evidence="27">C</name>
        <sequence type="described" ref="VSP_039604 VSP_039605 VSP_039611"/>
    </isoform>
    <isoform>
        <id>O62305-6</id>
        <name evidence="26 27">f</name>
        <name evidence="27">E</name>
        <sequence type="described" ref="VSP_039598 VSP_039602"/>
    </isoform>
    <isoform>
        <id>O62305-7</id>
        <name evidence="26 27">g</name>
        <name evidence="27">B</name>
        <sequence type="described" ref="VSP_039597 VSP_039603"/>
    </isoform>
    <isoform>
        <id>O62305-8</id>
        <name evidence="26 27">h</name>
        <name evidence="27">D</name>
        <sequence type="described" ref="VSP_039604 VSP_039605"/>
    </isoform>
    <isoform>
        <id>O62305-9</id>
        <name evidence="26 27">i</name>
        <name evidence="27">H</name>
        <sequence type="described" ref="VSP_039597 VSP_039603 VSP_039612 VSP_039613"/>
    </isoform>
    <isoform>
        <id>O62305-10</id>
        <name evidence="26 27">k</name>
        <name evidence="27">F</name>
        <sequence type="described" ref="VSP_039599 VSP_039601"/>
    </isoform>
    <isoform>
        <id>O62305-11</id>
        <name evidence="26 27">l</name>
        <name evidence="27">G</name>
        <sequence type="described" ref="VSP_039600 VSP_039601"/>
    </isoform>
    <isoform>
        <id>O62305-12</id>
        <name evidence="26">m</name>
        <sequence type="described" ref="VSP_039594 VSP_039606"/>
    </isoform>
    <isoform>
        <id>O62305-13</id>
        <name evidence="26">n</name>
        <sequence type="described" ref="VSP_039590 VSP_039610"/>
    </isoform>
    <isoform>
        <id>O62305-14</id>
        <name evidence="26">o</name>
        <sequence type="described" ref="VSP_039593 VSP_039607 VSP_039611"/>
    </isoform>
    <isoform>
        <id>O62305-15</id>
        <name evidence="26">p</name>
        <sequence type="described" ref="VSP_039591 VSP_039609"/>
    </isoform>
</comment>
<comment type="tissue specificity">
    <text evidence="6 11 12 22">Expressed in the nervous system. Observed in the ADF and AWC neurons. Position in AWC neurons is regulated by microtubules. Localized to clusters in ventral cord neurites which appear to be required for glr-1 trafficking. Also present in oocytes.</text>
</comment>
<comment type="disruption phenotype">
    <text evidence="6 8 15 16 17 22">Increased frequency of defecation, typified by a weaker repetition of the defecation motor program, an echo, 10 s after the primary motor program. Abnormal spicule protraction. Lack of tph-1 transcriptional up-regulation during learned olfactory aversion to bacteria. Reduced brood size, body length and width. Lethargic movement. A gain-of function mutation reduces locomotory activity, alters excitation of three muscle types and lengthens the period of the motor output of a behavioral clock. Both classes of mutation inhibit neurotransmitter release.</text>
</comment>
<comment type="similarity">
    <text evidence="2">Belongs to the protein kinase superfamily. CAMK Ser/Thr protein kinase family. CaMK subfamily.</text>
</comment>